<gene>
    <name evidence="1" type="primary">dapB</name>
    <name type="ordered locus">RPC_0335</name>
</gene>
<comment type="function">
    <text evidence="1">Catalyzes the conversion of 4-hydroxy-tetrahydrodipicolinate (HTPA) to tetrahydrodipicolinate.</text>
</comment>
<comment type="catalytic activity">
    <reaction evidence="1">
        <text>(S)-2,3,4,5-tetrahydrodipicolinate + NAD(+) + H2O = (2S,4S)-4-hydroxy-2,3,4,5-tetrahydrodipicolinate + NADH + H(+)</text>
        <dbReference type="Rhea" id="RHEA:35323"/>
        <dbReference type="ChEBI" id="CHEBI:15377"/>
        <dbReference type="ChEBI" id="CHEBI:15378"/>
        <dbReference type="ChEBI" id="CHEBI:16845"/>
        <dbReference type="ChEBI" id="CHEBI:57540"/>
        <dbReference type="ChEBI" id="CHEBI:57945"/>
        <dbReference type="ChEBI" id="CHEBI:67139"/>
        <dbReference type="EC" id="1.17.1.8"/>
    </reaction>
</comment>
<comment type="catalytic activity">
    <reaction evidence="1">
        <text>(S)-2,3,4,5-tetrahydrodipicolinate + NADP(+) + H2O = (2S,4S)-4-hydroxy-2,3,4,5-tetrahydrodipicolinate + NADPH + H(+)</text>
        <dbReference type="Rhea" id="RHEA:35331"/>
        <dbReference type="ChEBI" id="CHEBI:15377"/>
        <dbReference type="ChEBI" id="CHEBI:15378"/>
        <dbReference type="ChEBI" id="CHEBI:16845"/>
        <dbReference type="ChEBI" id="CHEBI:57783"/>
        <dbReference type="ChEBI" id="CHEBI:58349"/>
        <dbReference type="ChEBI" id="CHEBI:67139"/>
        <dbReference type="EC" id="1.17.1.8"/>
    </reaction>
</comment>
<comment type="pathway">
    <text evidence="1">Amino-acid biosynthesis; L-lysine biosynthesis via DAP pathway; (S)-tetrahydrodipicolinate from L-aspartate: step 4/4.</text>
</comment>
<comment type="subcellular location">
    <subcellularLocation>
        <location evidence="1">Cytoplasm</location>
    </subcellularLocation>
</comment>
<comment type="similarity">
    <text evidence="1">Belongs to the DapB family.</text>
</comment>
<comment type="caution">
    <text evidence="2">Was originally thought to be a dihydrodipicolinate reductase (DHDPR), catalyzing the conversion of dihydrodipicolinate to tetrahydrodipicolinate. However, it was shown in E.coli that the substrate of the enzymatic reaction is not dihydrodipicolinate (DHDP) but in fact (2S,4S)-4-hydroxy-2,3,4,5-tetrahydrodipicolinic acid (HTPA), the product released by the DapA-catalyzed reaction.</text>
</comment>
<sequence length="271" mass="27551">MSDMRLIVAGAGGRMGRALIRAITETPGAVVAGALEAPTSALLGQDAGTLAGLPPSGVKLSADLWALSAEADGIVDFTVPEATIANVAIAAQRGMVHVIGTTGLTASDDAVISSVTSRATVVKSGNMSLGVNLLAALVKRVARSLDDGFDIEIVEMHHKAKIDAPSGTALLLGEAAAAGRGVALAEHSIRGRDGVTGARKAGDIGFASLRGGTVTGDHTVIFAGPYERIELTHKAEDRMIFAHGALKAALWARDQGPGLYSMADVLGLSDI</sequence>
<protein>
    <recommendedName>
        <fullName evidence="1">4-hydroxy-tetrahydrodipicolinate reductase</fullName>
        <shortName evidence="1">HTPA reductase</shortName>
        <ecNumber evidence="1">1.17.1.8</ecNumber>
    </recommendedName>
</protein>
<reference key="1">
    <citation type="submission" date="2006-03" db="EMBL/GenBank/DDBJ databases">
        <title>Complete sequence of Rhodopseudomonas palustris BisB18.</title>
        <authorList>
            <consortium name="US DOE Joint Genome Institute"/>
            <person name="Copeland A."/>
            <person name="Lucas S."/>
            <person name="Lapidus A."/>
            <person name="Barry K."/>
            <person name="Detter J.C."/>
            <person name="Glavina del Rio T."/>
            <person name="Hammon N."/>
            <person name="Israni S."/>
            <person name="Dalin E."/>
            <person name="Tice H."/>
            <person name="Pitluck S."/>
            <person name="Chain P."/>
            <person name="Malfatti S."/>
            <person name="Shin M."/>
            <person name="Vergez L."/>
            <person name="Schmutz J."/>
            <person name="Larimer F."/>
            <person name="Land M."/>
            <person name="Hauser L."/>
            <person name="Pelletier D.A."/>
            <person name="Kyrpides N."/>
            <person name="Anderson I."/>
            <person name="Oda Y."/>
            <person name="Harwood C.S."/>
            <person name="Richardson P."/>
        </authorList>
    </citation>
    <scope>NUCLEOTIDE SEQUENCE [LARGE SCALE GENOMIC DNA]</scope>
    <source>
        <strain>BisB18</strain>
    </source>
</reference>
<proteinExistence type="inferred from homology"/>
<name>DAPB_RHOPB</name>
<dbReference type="EC" id="1.17.1.8" evidence="1"/>
<dbReference type="EMBL" id="CP000301">
    <property type="protein sequence ID" value="ABD85910.1"/>
    <property type="molecule type" value="Genomic_DNA"/>
</dbReference>
<dbReference type="SMR" id="Q21CH6"/>
<dbReference type="STRING" id="316056.RPC_0335"/>
<dbReference type="KEGG" id="rpc:RPC_0335"/>
<dbReference type="eggNOG" id="COG0289">
    <property type="taxonomic scope" value="Bacteria"/>
</dbReference>
<dbReference type="HOGENOM" id="CLU_047479_2_1_5"/>
<dbReference type="OrthoDB" id="9790352at2"/>
<dbReference type="UniPathway" id="UPA00034">
    <property type="reaction ID" value="UER00018"/>
</dbReference>
<dbReference type="GO" id="GO:0005829">
    <property type="term" value="C:cytosol"/>
    <property type="evidence" value="ECO:0007669"/>
    <property type="project" value="TreeGrafter"/>
</dbReference>
<dbReference type="GO" id="GO:0008839">
    <property type="term" value="F:4-hydroxy-tetrahydrodipicolinate reductase"/>
    <property type="evidence" value="ECO:0007669"/>
    <property type="project" value="UniProtKB-EC"/>
</dbReference>
<dbReference type="GO" id="GO:0051287">
    <property type="term" value="F:NAD binding"/>
    <property type="evidence" value="ECO:0007669"/>
    <property type="project" value="UniProtKB-UniRule"/>
</dbReference>
<dbReference type="GO" id="GO:0050661">
    <property type="term" value="F:NADP binding"/>
    <property type="evidence" value="ECO:0007669"/>
    <property type="project" value="UniProtKB-UniRule"/>
</dbReference>
<dbReference type="GO" id="GO:0016726">
    <property type="term" value="F:oxidoreductase activity, acting on CH or CH2 groups, NAD or NADP as acceptor"/>
    <property type="evidence" value="ECO:0007669"/>
    <property type="project" value="UniProtKB-UniRule"/>
</dbReference>
<dbReference type="GO" id="GO:0019877">
    <property type="term" value="P:diaminopimelate biosynthetic process"/>
    <property type="evidence" value="ECO:0007669"/>
    <property type="project" value="UniProtKB-UniRule"/>
</dbReference>
<dbReference type="GO" id="GO:0009089">
    <property type="term" value="P:lysine biosynthetic process via diaminopimelate"/>
    <property type="evidence" value="ECO:0007669"/>
    <property type="project" value="UniProtKB-UniRule"/>
</dbReference>
<dbReference type="CDD" id="cd02274">
    <property type="entry name" value="DHDPR_N"/>
    <property type="match status" value="1"/>
</dbReference>
<dbReference type="FunFam" id="3.30.360.10:FF:000004">
    <property type="entry name" value="4-hydroxy-tetrahydrodipicolinate reductase"/>
    <property type="match status" value="1"/>
</dbReference>
<dbReference type="Gene3D" id="3.30.360.10">
    <property type="entry name" value="Dihydrodipicolinate Reductase, domain 2"/>
    <property type="match status" value="1"/>
</dbReference>
<dbReference type="Gene3D" id="3.40.50.720">
    <property type="entry name" value="NAD(P)-binding Rossmann-like Domain"/>
    <property type="match status" value="1"/>
</dbReference>
<dbReference type="HAMAP" id="MF_00102">
    <property type="entry name" value="DapB"/>
    <property type="match status" value="1"/>
</dbReference>
<dbReference type="InterPro" id="IPR022663">
    <property type="entry name" value="DapB_C"/>
</dbReference>
<dbReference type="InterPro" id="IPR000846">
    <property type="entry name" value="DapB_N"/>
</dbReference>
<dbReference type="InterPro" id="IPR022664">
    <property type="entry name" value="DapB_N_CS"/>
</dbReference>
<dbReference type="InterPro" id="IPR023940">
    <property type="entry name" value="DHDPR_bac"/>
</dbReference>
<dbReference type="InterPro" id="IPR036291">
    <property type="entry name" value="NAD(P)-bd_dom_sf"/>
</dbReference>
<dbReference type="NCBIfam" id="TIGR00036">
    <property type="entry name" value="dapB"/>
    <property type="match status" value="1"/>
</dbReference>
<dbReference type="PANTHER" id="PTHR20836:SF0">
    <property type="entry name" value="4-HYDROXY-TETRAHYDRODIPICOLINATE REDUCTASE 1, CHLOROPLASTIC-RELATED"/>
    <property type="match status" value="1"/>
</dbReference>
<dbReference type="PANTHER" id="PTHR20836">
    <property type="entry name" value="DIHYDRODIPICOLINATE REDUCTASE"/>
    <property type="match status" value="1"/>
</dbReference>
<dbReference type="Pfam" id="PF05173">
    <property type="entry name" value="DapB_C"/>
    <property type="match status" value="1"/>
</dbReference>
<dbReference type="Pfam" id="PF01113">
    <property type="entry name" value="DapB_N"/>
    <property type="match status" value="1"/>
</dbReference>
<dbReference type="PIRSF" id="PIRSF000161">
    <property type="entry name" value="DHPR"/>
    <property type="match status" value="1"/>
</dbReference>
<dbReference type="SUPFAM" id="SSF55347">
    <property type="entry name" value="Glyceraldehyde-3-phosphate dehydrogenase-like, C-terminal domain"/>
    <property type="match status" value="1"/>
</dbReference>
<dbReference type="SUPFAM" id="SSF51735">
    <property type="entry name" value="NAD(P)-binding Rossmann-fold domains"/>
    <property type="match status" value="1"/>
</dbReference>
<dbReference type="PROSITE" id="PS01298">
    <property type="entry name" value="DAPB"/>
    <property type="match status" value="1"/>
</dbReference>
<accession>Q21CH6</accession>
<organism>
    <name type="scientific">Rhodopseudomonas palustris (strain BisB18)</name>
    <dbReference type="NCBI Taxonomy" id="316056"/>
    <lineage>
        <taxon>Bacteria</taxon>
        <taxon>Pseudomonadati</taxon>
        <taxon>Pseudomonadota</taxon>
        <taxon>Alphaproteobacteria</taxon>
        <taxon>Hyphomicrobiales</taxon>
        <taxon>Nitrobacteraceae</taxon>
        <taxon>Rhodopseudomonas</taxon>
    </lineage>
</organism>
<keyword id="KW-0028">Amino-acid biosynthesis</keyword>
<keyword id="KW-0963">Cytoplasm</keyword>
<keyword id="KW-0220">Diaminopimelate biosynthesis</keyword>
<keyword id="KW-0457">Lysine biosynthesis</keyword>
<keyword id="KW-0520">NAD</keyword>
<keyword id="KW-0521">NADP</keyword>
<keyword id="KW-0560">Oxidoreductase</keyword>
<feature type="chain" id="PRO_1000008620" description="4-hydroxy-tetrahydrodipicolinate reductase">
    <location>
        <begin position="1"/>
        <end position="271"/>
    </location>
</feature>
<feature type="active site" description="Proton donor/acceptor" evidence="1">
    <location>
        <position position="157"/>
    </location>
</feature>
<feature type="active site" description="Proton donor" evidence="1">
    <location>
        <position position="161"/>
    </location>
</feature>
<feature type="binding site" evidence="1">
    <location>
        <begin position="10"/>
        <end position="15"/>
    </location>
    <ligand>
        <name>NAD(+)</name>
        <dbReference type="ChEBI" id="CHEBI:57540"/>
    </ligand>
</feature>
<feature type="binding site" evidence="1">
    <location>
        <position position="36"/>
    </location>
    <ligand>
        <name>NAD(+)</name>
        <dbReference type="ChEBI" id="CHEBI:57540"/>
    </ligand>
</feature>
<feature type="binding site" evidence="1">
    <location>
        <begin position="100"/>
        <end position="102"/>
    </location>
    <ligand>
        <name>NAD(+)</name>
        <dbReference type="ChEBI" id="CHEBI:57540"/>
    </ligand>
</feature>
<feature type="binding site" evidence="1">
    <location>
        <begin position="124"/>
        <end position="127"/>
    </location>
    <ligand>
        <name>NAD(+)</name>
        <dbReference type="ChEBI" id="CHEBI:57540"/>
    </ligand>
</feature>
<feature type="binding site" evidence="1">
    <location>
        <position position="158"/>
    </location>
    <ligand>
        <name>(S)-2,3,4,5-tetrahydrodipicolinate</name>
        <dbReference type="ChEBI" id="CHEBI:16845"/>
    </ligand>
</feature>
<feature type="binding site" evidence="1">
    <location>
        <begin position="167"/>
        <end position="168"/>
    </location>
    <ligand>
        <name>(S)-2,3,4,5-tetrahydrodipicolinate</name>
        <dbReference type="ChEBI" id="CHEBI:16845"/>
    </ligand>
</feature>
<evidence type="ECO:0000255" key="1">
    <source>
        <dbReference type="HAMAP-Rule" id="MF_00102"/>
    </source>
</evidence>
<evidence type="ECO:0000305" key="2"/>